<sequence>MADPAGTNGEEGTGCNGWFYVEAVVEKKTGDAISDDENENDSDTGEDLVDFIVNDNDYLTQAETETAHALFTAQEAKQHRDAVQVLKRKYLVSPLSDISGCVDNNISPRLKAICIEKQSRAAKRRLFESEDSGYGNTEVETQQMLQVEGRHETETPCSQYSGGSGGGCSQYSSGSGGEGVSERHTICQTPLTNILNVLKTSNAKAAMLAKFKELYGVSFSELVRPFKSNKSTCCDWCIAAFGLTPSIADSIKTLLQQYCLYLHIQSLACSWGMVVLLLVRYKCGKNRETIEKLLSKLLCVSPMCMMIEPPKLRSTAAALYWYKTGISNISEVYGDTPEWIQRQTVLQHSFNDCTFELSQMVQWAYDNDIVDDSEIAYKYAQLADTNSNASAFLKSNSQAKIVKDCATMCRHYKRAEKKQMSMSQWIKYRCDRVDDGGDWKQIVMFLRYQGVEFMSFLTALKRFLQGIPKKNCILLYGAANTGKSLFGMSLMKFLQGSVICFVNSKSHFWLQPLADAKIGMLDDATVPCWNYIDDNLRNALDGNLVSMDVKHRPLVQLKCPPLLITSNINAGTDSRWPYLHNRLVVFTFPNEFPFDENGNPVYELNDKNWKSFFSRTWSRLSLHEDEDKENDGDSLPTFKCVSGQNTNTL</sequence>
<gene>
    <name evidence="1" type="primary">E1</name>
</gene>
<evidence type="ECO:0000255" key="1">
    <source>
        <dbReference type="HAMAP-Rule" id="MF_04000"/>
    </source>
</evidence>
<evidence type="ECO:0000256" key="2">
    <source>
        <dbReference type="SAM" id="MobiDB-lite"/>
    </source>
</evidence>
<evidence type="ECO:0000269" key="3">
    <source>
    </source>
</evidence>
<evidence type="ECO:0000269" key="4">
    <source>
    </source>
</evidence>
<evidence type="ECO:0000305" key="5"/>
<name>VE1_HPV16</name>
<proteinExistence type="evidence at protein level"/>
<reference key="1">
    <citation type="journal article" date="1985" name="Virology">
        <title>Human papillomavirus type 16 DNA sequence.</title>
        <authorList>
            <person name="Seedorf K."/>
            <person name="Krammer G."/>
            <person name="Durst M."/>
            <person name="Suhai S."/>
            <person name="Rowekamp W.G."/>
        </authorList>
    </citation>
    <scope>NUCLEOTIDE SEQUENCE [GENOMIC DNA]</scope>
</reference>
<reference key="2">
    <citation type="submission" date="2002-08" db="EMBL/GenBank/DDBJ databases">
        <title>Cloning and sequencing of non-European human papillomavirus (HPV) variant complete genomes from cervicovaginal cells by an overlapping PCR method.</title>
        <authorList>
            <person name="Terai M."/>
            <person name="Fu L."/>
            <person name="Ma Z."/>
            <person name="Burk R.D."/>
        </authorList>
    </citation>
    <scope>NUCLEOTIDE SEQUENCE [GENOMIC DNA]</scope>
    <source>
        <strain>Isolate European German 131</strain>
    </source>
</reference>
<reference key="3">
    <citation type="journal article" date="1992" name="J. Virol.">
        <title>Transient replication of human papillomavirus DNAs.</title>
        <authorList>
            <person name="Del Vecchio A.M."/>
            <person name="Romanczuk H."/>
            <person name="Howley P.M."/>
            <person name="Baker C.C."/>
        </authorList>
    </citation>
    <scope>FUNCTION</scope>
</reference>
<reference key="4">
    <citation type="journal article" date="1998" name="J. Virol.">
        <title>A C-terminal helicase domain of the human papillomavirus E1 protein binds E2 and the DNA polymerase alpha-primase p68 subunit.</title>
        <authorList>
            <person name="Masterson P.J."/>
            <person name="Stanley M.A."/>
            <person name="Lewis A.P."/>
            <person name="Romanos M.A."/>
        </authorList>
    </citation>
    <scope>FUNCTION</scope>
    <scope>INTERACTION WITH PROTEIN E2 AND HOST POLA2</scope>
</reference>
<comment type="function">
    <text evidence="1 3 4">ATP-dependent DNA 3'-5' helicase required for initiation of viral DNA replication. It forms a complex with the viral E2 protein. The E1-E2 complex binds to the replication origin which contains binding sites for both proteins. During the initial step, a dimer of E1 interacts with a dimer of protein E2 leading to a complex that binds the viral origin of replication with high specificity. Then, a second dimer of E1 displaces the E2 dimer in an ATP-dependent manner to form the E1 tetramer. Following this, two E1 monomers are added to each half of the site, which results in the formation of two E1 trimers on the viral ori. Subsequently, two hexamers will be created. The double hexamer acts as a bi-directional helicase machinery and unwinds the viral DNA and then recruits the host DNA polymerase to start replication.</text>
</comment>
<comment type="catalytic activity">
    <reaction evidence="1">
        <text>Couples ATP hydrolysis with the unwinding of duplex DNA by translocating in the 3'-5' direction.</text>
        <dbReference type="EC" id="5.6.2.4"/>
    </reaction>
</comment>
<comment type="catalytic activity">
    <reaction evidence="1">
        <text>ATP + H2O = ADP + phosphate + H(+)</text>
        <dbReference type="Rhea" id="RHEA:13065"/>
        <dbReference type="ChEBI" id="CHEBI:15377"/>
        <dbReference type="ChEBI" id="CHEBI:15378"/>
        <dbReference type="ChEBI" id="CHEBI:30616"/>
        <dbReference type="ChEBI" id="CHEBI:43474"/>
        <dbReference type="ChEBI" id="CHEBI:456216"/>
        <dbReference type="EC" id="5.6.2.4"/>
    </reaction>
</comment>
<comment type="subunit">
    <text evidence="1 4">Can form hexamers. Interacts with E2 protein; this interaction increases E1 DNA binding specificity. Interacts with host DNA polymerase subunit POLA2. Interacts with host single stranded DNA-binding protein RPA1. Interacts with host TOP1; this interaction stimulates the enzymatic activity of TOP1.</text>
</comment>
<comment type="interaction">
    <interactant intactId="EBI-7387308">
        <id>P03114</id>
    </interactant>
    <interactant intactId="EBI-1779322">
        <id>P03120</id>
        <label>E2</label>
    </interactant>
    <organismsDiffer>false</organismsDiffer>
    <experiments>3</experiments>
</comment>
<comment type="subcellular location">
    <subcellularLocation>
        <location evidence="1">Host nucleus</location>
    </subcellularLocation>
</comment>
<comment type="PTM">
    <text evidence="1">Phosphorylated.</text>
</comment>
<comment type="PTM">
    <text evidence="1">Sumoylated.</text>
</comment>
<comment type="miscellaneous">
    <text>HPV16, in comparison to HPV types 6 and 11, is more often associated with malignant genital cancers in humans.</text>
</comment>
<comment type="similarity">
    <text evidence="1">Belongs to the papillomaviridae E1 protein family.</text>
</comment>
<feature type="chain" id="PRO_0000133114" description="Replication protein E1">
    <location>
        <begin position="1"/>
        <end position="649"/>
    </location>
</feature>
<feature type="domain" description="SF3 helicase" evidence="1">
    <location>
        <begin position="451"/>
        <end position="601"/>
    </location>
</feature>
<feature type="region of interest" description="DNA-binding region" evidence="1">
    <location>
        <begin position="186"/>
        <end position="352"/>
    </location>
</feature>
<feature type="region of interest" description="Disordered" evidence="2">
    <location>
        <begin position="624"/>
        <end position="649"/>
    </location>
</feature>
<feature type="short sequence motif" description="Nuclear localization signal" evidence="1">
    <location>
        <begin position="87"/>
        <end position="89"/>
    </location>
</feature>
<feature type="short sequence motif" description="Nuclear export signal" evidence="1">
    <location>
        <begin position="106"/>
        <end position="115"/>
    </location>
</feature>
<feature type="binding site" evidence="1">
    <location>
        <begin position="477"/>
        <end position="484"/>
    </location>
    <ligand>
        <name>ATP</name>
        <dbReference type="ChEBI" id="CHEBI:30616"/>
    </ligand>
</feature>
<feature type="modified residue" description="Phosphoserine; by host" evidence="1">
    <location>
        <position position="93"/>
    </location>
</feature>
<feature type="modified residue" description="Phosphoserine; by host" evidence="1">
    <location>
        <position position="107"/>
    </location>
</feature>
<feature type="cross-link" description="Glycyl lysine isopeptide (Lys-Gly) (interchain with G-Cter in SUMO)" evidence="1">
    <location>
        <position position="558"/>
    </location>
</feature>
<feature type="sequence conflict" description="In Ref. 2; AAQ10714." evidence="5" ref="2">
    <original>V</original>
    <variation>G</variation>
    <location>
        <position position="92"/>
    </location>
</feature>
<feature type="sequence conflict" description="In Ref. 2; AAQ10714." evidence="5" ref="2">
    <original>M</original>
    <variation>T</variation>
    <location>
        <position position="144"/>
    </location>
</feature>
<feature type="sequence conflict" description="In Ref. 2; AAQ10714." evidence="5" ref="2">
    <original>S</original>
    <variation>T</variation>
    <location>
        <position position="220"/>
    </location>
</feature>
<feature type="sequence conflict" description="In Ref. 2; AAQ10714." evidence="5" ref="2">
    <original>I</original>
    <variation>M</variation>
    <location>
        <position position="340"/>
    </location>
</feature>
<protein>
    <recommendedName>
        <fullName evidence="1">Replication protein E1</fullName>
        <ecNumber evidence="1">5.6.2.4</ecNumber>
    </recommendedName>
    <alternativeName>
        <fullName evidence="1">ATP-dependent helicase E1</fullName>
    </alternativeName>
    <alternativeName>
        <fullName evidence="1">DNA 3'-5' helicase E1</fullName>
    </alternativeName>
</protein>
<keyword id="KW-0067">ATP-binding</keyword>
<keyword id="KW-0235">DNA replication</keyword>
<keyword id="KW-0238">DNA-binding</keyword>
<keyword id="KW-0244">Early protein</keyword>
<keyword id="KW-0347">Helicase</keyword>
<keyword id="KW-1048">Host nucleus</keyword>
<keyword id="KW-0378">Hydrolase</keyword>
<keyword id="KW-0413">Isomerase</keyword>
<keyword id="KW-1017">Isopeptide bond</keyword>
<keyword id="KW-0547">Nucleotide-binding</keyword>
<keyword id="KW-0597">Phosphoprotein</keyword>
<keyword id="KW-1185">Reference proteome</keyword>
<keyword id="KW-0832">Ubl conjugation</keyword>
<accession>P03114</accession>
<accession>P03115</accession>
<accession>Q71BI5</accession>
<organism>
    <name type="scientific">Human papillomavirus type 16</name>
    <dbReference type="NCBI Taxonomy" id="333760"/>
    <lineage>
        <taxon>Viruses</taxon>
        <taxon>Monodnaviria</taxon>
        <taxon>Shotokuvirae</taxon>
        <taxon>Cossaviricota</taxon>
        <taxon>Papovaviricetes</taxon>
        <taxon>Zurhausenvirales</taxon>
        <taxon>Papillomaviridae</taxon>
        <taxon>Firstpapillomavirinae</taxon>
        <taxon>Alphapapillomavirus</taxon>
        <taxon>Alphapapillomavirus 9</taxon>
    </lineage>
</organism>
<dbReference type="EC" id="5.6.2.4" evidence="1"/>
<dbReference type="EMBL" id="K02718">
    <property type="protein sequence ID" value="AAA46936.1"/>
    <property type="molecule type" value="Genomic_DNA"/>
</dbReference>
<dbReference type="EMBL" id="AF536179">
    <property type="protein sequence ID" value="AAQ10714.1"/>
    <property type="molecule type" value="Genomic_DNA"/>
</dbReference>
<dbReference type="PIR" id="T10424">
    <property type="entry name" value="W1WLHS"/>
</dbReference>
<dbReference type="SMR" id="P03114"/>
<dbReference type="BioGRID" id="4263554">
    <property type="interactions" value="4"/>
</dbReference>
<dbReference type="IntAct" id="P03114">
    <property type="interactions" value="3"/>
</dbReference>
<dbReference type="MINT" id="P03114"/>
<dbReference type="Proteomes" id="UP000009251">
    <property type="component" value="Segment"/>
</dbReference>
<dbReference type="Proteomes" id="UP000106302">
    <property type="component" value="Genome"/>
</dbReference>
<dbReference type="GO" id="GO:0042025">
    <property type="term" value="C:host cell nucleus"/>
    <property type="evidence" value="ECO:0007669"/>
    <property type="project" value="UniProtKB-SubCell"/>
</dbReference>
<dbReference type="GO" id="GO:0005524">
    <property type="term" value="F:ATP binding"/>
    <property type="evidence" value="ECO:0007669"/>
    <property type="project" value="UniProtKB-UniRule"/>
</dbReference>
<dbReference type="GO" id="GO:0016887">
    <property type="term" value="F:ATP hydrolysis activity"/>
    <property type="evidence" value="ECO:0007669"/>
    <property type="project" value="RHEA"/>
</dbReference>
<dbReference type="GO" id="GO:0003677">
    <property type="term" value="F:DNA binding"/>
    <property type="evidence" value="ECO:0007669"/>
    <property type="project" value="UniProtKB-UniRule"/>
</dbReference>
<dbReference type="GO" id="GO:0003678">
    <property type="term" value="F:DNA helicase activity"/>
    <property type="evidence" value="ECO:0007669"/>
    <property type="project" value="UniProtKB-UniRule"/>
</dbReference>
<dbReference type="GO" id="GO:0006260">
    <property type="term" value="P:DNA replication"/>
    <property type="evidence" value="ECO:0007669"/>
    <property type="project" value="UniProtKB-UniRule"/>
</dbReference>
<dbReference type="Gene3D" id="3.40.1310.10">
    <property type="match status" value="1"/>
</dbReference>
<dbReference type="Gene3D" id="3.40.50.300">
    <property type="entry name" value="P-loop containing nucleotide triphosphate hydrolases"/>
    <property type="match status" value="1"/>
</dbReference>
<dbReference type="Gene3D" id="1.10.10.510">
    <property type="entry name" value="Zinc finger, large T-antigen D1 domain"/>
    <property type="match status" value="1"/>
</dbReference>
<dbReference type="HAMAP" id="MF_04000">
    <property type="entry name" value="PPV_E1"/>
    <property type="match status" value="1"/>
</dbReference>
<dbReference type="InterPro" id="IPR014015">
    <property type="entry name" value="Helicase_SF3_DNA-vir"/>
</dbReference>
<dbReference type="InterPro" id="IPR027417">
    <property type="entry name" value="P-loop_NTPase"/>
</dbReference>
<dbReference type="InterPro" id="IPR001177">
    <property type="entry name" value="PPV_DNA_helicase_E1_C"/>
</dbReference>
<dbReference type="InterPro" id="IPR014000">
    <property type="entry name" value="PPV_DNA_helicase_E1_N"/>
</dbReference>
<dbReference type="InterPro" id="IPR046832">
    <property type="entry name" value="PPV_E1_DBD"/>
</dbReference>
<dbReference type="InterPro" id="IPR046935">
    <property type="entry name" value="PPV_E1_DBD_sf"/>
</dbReference>
<dbReference type="InterPro" id="IPR016393">
    <property type="entry name" value="Rep_E1_papillomaV"/>
</dbReference>
<dbReference type="InterPro" id="IPR037102">
    <property type="entry name" value="Znf_lg_T-Ag_D1_dom_sf"/>
</dbReference>
<dbReference type="Pfam" id="PF00519">
    <property type="entry name" value="PPV_E1_C"/>
    <property type="match status" value="1"/>
</dbReference>
<dbReference type="Pfam" id="PF20450">
    <property type="entry name" value="PPV_E1_DBD"/>
    <property type="match status" value="1"/>
</dbReference>
<dbReference type="Pfam" id="PF00524">
    <property type="entry name" value="PPV_E1_N"/>
    <property type="match status" value="1"/>
</dbReference>
<dbReference type="PIRSF" id="PIRSF003383">
    <property type="entry name" value="Rep_E1_papillomaV"/>
    <property type="match status" value="1"/>
</dbReference>
<dbReference type="SUPFAM" id="SSF55464">
    <property type="entry name" value="Origin of replication-binding domain, RBD-like"/>
    <property type="match status" value="1"/>
</dbReference>
<dbReference type="SUPFAM" id="SSF52540">
    <property type="entry name" value="P-loop containing nucleoside triphosphate hydrolases"/>
    <property type="match status" value="1"/>
</dbReference>
<dbReference type="PROSITE" id="PS51206">
    <property type="entry name" value="SF3_HELICASE_1"/>
    <property type="match status" value="1"/>
</dbReference>
<organismHost>
    <name type="scientific">Homo sapiens</name>
    <name type="common">Human</name>
    <dbReference type="NCBI Taxonomy" id="9606"/>
</organismHost>